<organism>
    <name type="scientific">Acanthamoeba polyphaga mimivirus</name>
    <name type="common">APMV</name>
    <dbReference type="NCBI Taxonomy" id="212035"/>
    <lineage>
        <taxon>Viruses</taxon>
        <taxon>Varidnaviria</taxon>
        <taxon>Bamfordvirae</taxon>
        <taxon>Nucleocytoviricota</taxon>
        <taxon>Megaviricetes</taxon>
        <taxon>Imitervirales</taxon>
        <taxon>Mimiviridae</taxon>
        <taxon>Megamimivirinae</taxon>
        <taxon>Mimivirus</taxon>
        <taxon>Mimivirus bradfordmassiliense</taxon>
    </lineage>
</organism>
<sequence>MAGSFTRKMYDNCATQQTTKQSTDPLELLLDVNKYVNCNNICKPLAQRYPSSAQLVDVESSLWGIDKLASRCDSSKHPFCAKNGCLLTNDPRIAPHITPYACEWGHTGDNSVVTTNMKMPSHPGYTLPNPNICKDQTNGYYHNAVKSPNMTGPQHQVIPQHQVVPQHQTVPQHQSVIKPKADQLRYQNIQNRPY</sequence>
<name>YR459_MIMIV</name>
<comment type="subcellular location">
    <subcellularLocation>
        <location evidence="1">Virion</location>
    </subcellularLocation>
</comment>
<comment type="similarity">
    <text evidence="2">Belongs to the mimivirus R457/R459 family.</text>
</comment>
<reference key="1">
    <citation type="journal article" date="2004" name="Science">
        <title>The 1.2-megabase genome sequence of Mimivirus.</title>
        <authorList>
            <person name="Raoult D."/>
            <person name="Audic S."/>
            <person name="Robert C."/>
            <person name="Abergel C."/>
            <person name="Renesto P."/>
            <person name="Ogata H."/>
            <person name="La Scola B."/>
            <person name="Susan M."/>
            <person name="Claverie J.-M."/>
        </authorList>
    </citation>
    <scope>NUCLEOTIDE SEQUENCE [LARGE SCALE GENOMIC DNA]</scope>
    <source>
        <strain>Rowbotham-Bradford</strain>
    </source>
</reference>
<reference key="2">
    <citation type="journal article" date="2006" name="J. Virol.">
        <title>Mimivirus giant particles incorporate a large fraction of anonymous and unique gene products.</title>
        <authorList>
            <person name="Renesto P."/>
            <person name="Abergel C."/>
            <person name="Decloquement P."/>
            <person name="Moinier D."/>
            <person name="Azza S."/>
            <person name="Ogata H."/>
            <person name="Fourquet P."/>
            <person name="Gorvel J.-P."/>
            <person name="Claverie J.-M."/>
            <person name="Raoult D."/>
        </authorList>
    </citation>
    <scope>IDENTIFICATION BY MASS SPECTROMETRY [LARGE SCALE ANALYSIS]</scope>
    <scope>SUBCELLULAR LOCATION</scope>
</reference>
<dbReference type="EMBL" id="AY653733">
    <property type="protein sequence ID" value="AAV50725.1"/>
    <property type="molecule type" value="Genomic_DNA"/>
</dbReference>
<dbReference type="KEGG" id="vg:9925084"/>
<dbReference type="Proteomes" id="UP000001134">
    <property type="component" value="Genome"/>
</dbReference>
<dbReference type="GO" id="GO:0044423">
    <property type="term" value="C:virion component"/>
    <property type="evidence" value="ECO:0007669"/>
    <property type="project" value="UniProtKB-KW"/>
</dbReference>
<evidence type="ECO:0000269" key="1">
    <source>
    </source>
</evidence>
<evidence type="ECO:0000305" key="2"/>
<accession>Q5UQD0</accession>
<gene>
    <name type="ordered locus">MIMI_R459</name>
</gene>
<protein>
    <recommendedName>
        <fullName>Uncharacterized protein R459</fullName>
    </recommendedName>
</protein>
<organismHost>
    <name type="scientific">Acanthamoeba polyphaga</name>
    <name type="common">Amoeba</name>
    <dbReference type="NCBI Taxonomy" id="5757"/>
</organismHost>
<keyword id="KW-1185">Reference proteome</keyword>
<keyword id="KW-0946">Virion</keyword>
<proteinExistence type="evidence at protein level"/>
<feature type="chain" id="PRO_0000071286" description="Uncharacterized protein R459">
    <location>
        <begin position="1"/>
        <end position="194"/>
    </location>
</feature>